<dbReference type="EMBL" id="DQ128155">
    <property type="protein sequence ID" value="ABB02345.1"/>
    <property type="molecule type" value="Genomic_DNA"/>
</dbReference>
<dbReference type="SMR" id="Q0R3M2"/>
<dbReference type="GO" id="GO:0009535">
    <property type="term" value="C:chloroplast thylakoid membrane"/>
    <property type="evidence" value="ECO:0007669"/>
    <property type="project" value="UniProtKB-SubCell"/>
</dbReference>
<dbReference type="GO" id="GO:0009522">
    <property type="term" value="C:photosystem I"/>
    <property type="evidence" value="ECO:0007669"/>
    <property type="project" value="UniProtKB-KW"/>
</dbReference>
<dbReference type="GO" id="GO:0015979">
    <property type="term" value="P:photosynthesis"/>
    <property type="evidence" value="ECO:0007669"/>
    <property type="project" value="UniProtKB-UniRule"/>
</dbReference>
<dbReference type="HAMAP" id="MF_00828">
    <property type="entry name" value="PSI_PsaM"/>
    <property type="match status" value="1"/>
</dbReference>
<dbReference type="InterPro" id="IPR010010">
    <property type="entry name" value="PSI_PsaM"/>
</dbReference>
<dbReference type="InterPro" id="IPR037279">
    <property type="entry name" value="PSI_PsaM_sf"/>
</dbReference>
<dbReference type="NCBIfam" id="TIGR03053">
    <property type="entry name" value="PS_I_psaM"/>
    <property type="match status" value="1"/>
</dbReference>
<dbReference type="Pfam" id="PF07465">
    <property type="entry name" value="PsaM"/>
    <property type="match status" value="1"/>
</dbReference>
<dbReference type="SUPFAM" id="SSF81548">
    <property type="entry name" value="Subunit XII of photosystem I reaction centre, PsaM"/>
    <property type="match status" value="1"/>
</dbReference>
<sequence>MAIDNTQIFIALLTALIPAFFALKLGKELSK</sequence>
<protein>
    <recommendedName>
        <fullName evidence="1">Photosystem I reaction center subunit XII</fullName>
    </recommendedName>
    <alternativeName>
        <fullName evidence="1">PSI-M</fullName>
    </alternativeName>
</protein>
<keyword id="KW-0150">Chloroplast</keyword>
<keyword id="KW-0472">Membrane</keyword>
<keyword id="KW-0602">Photosynthesis</keyword>
<keyword id="KW-0603">Photosystem I</keyword>
<keyword id="KW-0934">Plastid</keyword>
<keyword id="KW-0793">Thylakoid</keyword>
<keyword id="KW-0812">Transmembrane</keyword>
<keyword id="KW-1133">Transmembrane helix</keyword>
<organism>
    <name type="scientific">Euglena granulata</name>
    <dbReference type="NCBI Taxonomy" id="69255"/>
    <lineage>
        <taxon>Eukaryota</taxon>
        <taxon>Discoba</taxon>
        <taxon>Euglenozoa</taxon>
        <taxon>Euglenida</taxon>
        <taxon>Spirocuta</taxon>
        <taxon>Euglenophyceae</taxon>
        <taxon>Euglenales</taxon>
        <taxon>Euglenaceae</taxon>
        <taxon>Euglena</taxon>
    </lineage>
</organism>
<accession>Q0R3M2</accession>
<feature type="chain" id="PRO_0000277402" description="Photosystem I reaction center subunit XII">
    <location>
        <begin position="1"/>
        <end position="31"/>
    </location>
</feature>
<feature type="transmembrane region" description="Helical" evidence="1">
    <location>
        <begin position="7"/>
        <end position="26"/>
    </location>
</feature>
<name>PSAM_EUGGA</name>
<geneLocation type="chloroplast"/>
<proteinExistence type="inferred from homology"/>
<evidence type="ECO:0000255" key="1">
    <source>
        <dbReference type="HAMAP-Rule" id="MF_00828"/>
    </source>
</evidence>
<comment type="subcellular location">
    <subcellularLocation>
        <location evidence="1">Plastid</location>
        <location evidence="1">Chloroplast thylakoid membrane</location>
        <topology evidence="1">Single-pass membrane protein</topology>
    </subcellularLocation>
</comment>
<comment type="similarity">
    <text evidence="1">Belongs to the PsaM family.</text>
</comment>
<gene>
    <name evidence="1" type="primary">psaM</name>
</gene>
<reference key="1">
    <citation type="submission" date="2005-07" db="EMBL/GenBank/DDBJ databases">
        <title>Evolution of genetic elements in Euglena species.</title>
        <authorList>
            <person name="Sheveleva E.V."/>
            <person name="De Armond R.L."/>
            <person name="Perkumas K.M."/>
            <person name="Giordani N.V."/>
            <person name="Hallick R.B."/>
        </authorList>
    </citation>
    <scope>NUCLEOTIDE SEQUENCE [GENOMIC DNA]</scope>
</reference>